<name>RNZ_THESM</name>
<comment type="function">
    <text evidence="1">Zinc phosphodiesterase, which displays some tRNA 3'-processing endonuclease activity. Probably involved in tRNA maturation, by removing a 3'-trailer from precursor tRNA.</text>
</comment>
<comment type="catalytic activity">
    <reaction evidence="1">
        <text>Endonucleolytic cleavage of RNA, removing extra 3' nucleotides from tRNA precursor, generating 3' termini of tRNAs. A 3'-hydroxy group is left at the tRNA terminus and a 5'-phosphoryl group is left at the trailer molecule.</text>
        <dbReference type="EC" id="3.1.26.11"/>
    </reaction>
</comment>
<comment type="cofactor">
    <cofactor evidence="1">
        <name>Zn(2+)</name>
        <dbReference type="ChEBI" id="CHEBI:29105"/>
    </cofactor>
    <text evidence="1">Binds 2 Zn(2+) ions.</text>
</comment>
<comment type="subunit">
    <text evidence="1">Homodimer.</text>
</comment>
<comment type="similarity">
    <text evidence="1">Belongs to the RNase Z family.</text>
</comment>
<feature type="chain" id="PRO_1000216021" description="Ribonuclease Z">
    <location>
        <begin position="1"/>
        <end position="306"/>
    </location>
</feature>
<feature type="active site" description="Proton acceptor" evidence="1">
    <location>
        <position position="65"/>
    </location>
</feature>
<feature type="binding site" evidence="1">
    <location>
        <position position="61"/>
    </location>
    <ligand>
        <name>Zn(2+)</name>
        <dbReference type="ChEBI" id="CHEBI:29105"/>
        <label>1</label>
        <note>catalytic</note>
    </ligand>
</feature>
<feature type="binding site" evidence="1">
    <location>
        <position position="63"/>
    </location>
    <ligand>
        <name>Zn(2+)</name>
        <dbReference type="ChEBI" id="CHEBI:29105"/>
        <label>1</label>
        <note>catalytic</note>
    </ligand>
</feature>
<feature type="binding site" evidence="1">
    <location>
        <position position="65"/>
    </location>
    <ligand>
        <name>Zn(2+)</name>
        <dbReference type="ChEBI" id="CHEBI:29105"/>
        <label>2</label>
        <note>catalytic</note>
    </ligand>
</feature>
<feature type="binding site" evidence="1">
    <location>
        <position position="66"/>
    </location>
    <ligand>
        <name>Zn(2+)</name>
        <dbReference type="ChEBI" id="CHEBI:29105"/>
        <label>2</label>
        <note>catalytic</note>
    </ligand>
</feature>
<feature type="binding site" evidence="1">
    <location>
        <position position="137"/>
    </location>
    <ligand>
        <name>Zn(2+)</name>
        <dbReference type="ChEBI" id="CHEBI:29105"/>
        <label>1</label>
        <note>catalytic</note>
    </ligand>
</feature>
<feature type="binding site" evidence="1">
    <location>
        <position position="207"/>
    </location>
    <ligand>
        <name>Zn(2+)</name>
        <dbReference type="ChEBI" id="CHEBI:29105"/>
        <label>1</label>
        <note>catalytic</note>
    </ligand>
</feature>
<feature type="binding site" evidence="1">
    <location>
        <position position="207"/>
    </location>
    <ligand>
        <name>Zn(2+)</name>
        <dbReference type="ChEBI" id="CHEBI:29105"/>
        <label>2</label>
        <note>catalytic</note>
    </ligand>
</feature>
<feature type="binding site" evidence="1">
    <location>
        <position position="263"/>
    </location>
    <ligand>
        <name>Zn(2+)</name>
        <dbReference type="ChEBI" id="CHEBI:29105"/>
        <label>2</label>
        <note>catalytic</note>
    </ligand>
</feature>
<gene>
    <name evidence="1" type="primary">rnz</name>
    <name type="ordered locus">TSIB_0827</name>
</gene>
<evidence type="ECO:0000255" key="1">
    <source>
        <dbReference type="HAMAP-Rule" id="MF_01818"/>
    </source>
</evidence>
<dbReference type="EC" id="3.1.26.11" evidence="1"/>
<dbReference type="EMBL" id="CP001463">
    <property type="protein sequence ID" value="ACS89888.1"/>
    <property type="molecule type" value="Genomic_DNA"/>
</dbReference>
<dbReference type="RefSeq" id="WP_015849108.1">
    <property type="nucleotide sequence ID" value="NC_012883.1"/>
</dbReference>
<dbReference type="SMR" id="C6A2P3"/>
<dbReference type="STRING" id="604354.TSIB_0827"/>
<dbReference type="GeneID" id="8095818"/>
<dbReference type="KEGG" id="tsi:TSIB_0827"/>
<dbReference type="eggNOG" id="arCOG00501">
    <property type="taxonomic scope" value="Archaea"/>
</dbReference>
<dbReference type="HOGENOM" id="CLU_031317_2_1_2"/>
<dbReference type="OrthoDB" id="85118at2157"/>
<dbReference type="Proteomes" id="UP000009079">
    <property type="component" value="Chromosome"/>
</dbReference>
<dbReference type="GO" id="GO:0042781">
    <property type="term" value="F:3'-tRNA processing endoribonuclease activity"/>
    <property type="evidence" value="ECO:0007669"/>
    <property type="project" value="UniProtKB-UniRule"/>
</dbReference>
<dbReference type="GO" id="GO:0008270">
    <property type="term" value="F:zinc ion binding"/>
    <property type="evidence" value="ECO:0007669"/>
    <property type="project" value="UniProtKB-UniRule"/>
</dbReference>
<dbReference type="CDD" id="cd07717">
    <property type="entry name" value="RNaseZ_ZiPD-like_MBL-fold"/>
    <property type="match status" value="1"/>
</dbReference>
<dbReference type="Gene3D" id="3.60.15.10">
    <property type="entry name" value="Ribonuclease Z/Hydroxyacylglutathione hydrolase-like"/>
    <property type="match status" value="1"/>
</dbReference>
<dbReference type="HAMAP" id="MF_01818">
    <property type="entry name" value="RNase_Z_BN"/>
    <property type="match status" value="1"/>
</dbReference>
<dbReference type="InterPro" id="IPR001279">
    <property type="entry name" value="Metallo-B-lactamas"/>
</dbReference>
<dbReference type="InterPro" id="IPR036866">
    <property type="entry name" value="RibonucZ/Hydroxyglut_hydro"/>
</dbReference>
<dbReference type="InterPro" id="IPR013471">
    <property type="entry name" value="RNase_Z/BN"/>
</dbReference>
<dbReference type="NCBIfam" id="NF000801">
    <property type="entry name" value="PRK00055.1-3"/>
    <property type="match status" value="1"/>
</dbReference>
<dbReference type="NCBIfam" id="TIGR02651">
    <property type="entry name" value="RNase_Z"/>
    <property type="match status" value="1"/>
</dbReference>
<dbReference type="PANTHER" id="PTHR46018">
    <property type="entry name" value="ZINC PHOSPHODIESTERASE ELAC PROTEIN 1"/>
    <property type="match status" value="1"/>
</dbReference>
<dbReference type="PANTHER" id="PTHR46018:SF2">
    <property type="entry name" value="ZINC PHOSPHODIESTERASE ELAC PROTEIN 1"/>
    <property type="match status" value="1"/>
</dbReference>
<dbReference type="Pfam" id="PF12706">
    <property type="entry name" value="Lactamase_B_2"/>
    <property type="match status" value="2"/>
</dbReference>
<dbReference type="SMART" id="SM00849">
    <property type="entry name" value="Lactamase_B"/>
    <property type="match status" value="1"/>
</dbReference>
<dbReference type="SUPFAM" id="SSF56281">
    <property type="entry name" value="Metallo-hydrolase/oxidoreductase"/>
    <property type="match status" value="1"/>
</dbReference>
<accession>C6A2P3</accession>
<proteinExistence type="inferred from homology"/>
<organism>
    <name type="scientific">Thermococcus sibiricus (strain DSM 12597 / MM 739)</name>
    <dbReference type="NCBI Taxonomy" id="604354"/>
    <lineage>
        <taxon>Archaea</taxon>
        <taxon>Methanobacteriati</taxon>
        <taxon>Methanobacteriota</taxon>
        <taxon>Thermococci</taxon>
        <taxon>Thermococcales</taxon>
        <taxon>Thermococcaceae</taxon>
        <taxon>Thermococcus</taxon>
    </lineage>
</organism>
<reference key="1">
    <citation type="journal article" date="2009" name="Appl. Environ. Microbiol.">
        <title>Metabolic versatility and indigenous origin of the archaeon Thermococcus sibiricus, isolated from a siberian oil reservoir, as revealed by genome analysis.</title>
        <authorList>
            <person name="Mardanov A.V."/>
            <person name="Ravin N.V."/>
            <person name="Svetlitchnyi V.A."/>
            <person name="Beletsky A.V."/>
            <person name="Miroshnichenko M.L."/>
            <person name="Bonch-Osmolovskaya E.A."/>
            <person name="Skryabin K.G."/>
        </authorList>
    </citation>
    <scope>NUCLEOTIDE SEQUENCE [LARGE SCALE GENOMIC DNA]</scope>
    <source>
        <strain>DSM 12597 / MM 739</strain>
    </source>
</reference>
<protein>
    <recommendedName>
        <fullName evidence="1">Ribonuclease Z</fullName>
        <shortName evidence="1">RNase Z</shortName>
        <ecNumber evidence="1">3.1.26.11</ecNumber>
    </recommendedName>
    <alternativeName>
        <fullName evidence="1">tRNA 3 endonuclease</fullName>
    </alternativeName>
    <alternativeName>
        <fullName evidence="1">tRNase Z</fullName>
    </alternativeName>
</protein>
<keyword id="KW-0255">Endonuclease</keyword>
<keyword id="KW-0378">Hydrolase</keyword>
<keyword id="KW-0479">Metal-binding</keyword>
<keyword id="KW-0540">Nuclease</keyword>
<keyword id="KW-1185">Reference proteome</keyword>
<keyword id="KW-0819">tRNA processing</keyword>
<keyword id="KW-0862">Zinc</keyword>
<sequence length="306" mass="35764">MLEVIFLGTGGIMPTKERNVPAIALKYGGEIILWDIGEGTLRQLDTTKLSPMKIEKIFITHFHGDHYLGLMSLIQTMTLWKRERPLYIYGPKYTFEFIQNYLKSGFFRPSFEIHIHELGETRLKFKDYEIWSFKVDHGIPALGYVFKENDKRGNFDVEKIRELGLKPGPWMKKLEIKGKIEINGKLIYLEDVTGEPKKGVKIVYTGDTEQCERIKLFSERADLLIHEATYLSREDKGDSYHSTVEEACETAKRAKVELLALFHRAPRYKYEEYVQEANKICEYKFIIPQDFDVVRLGEKYELSSLR</sequence>